<protein>
    <recommendedName>
        <fullName>Refilin-A</fullName>
    </recommendedName>
    <alternativeName>
        <fullName evidence="4">Regulator of filamin protein A</fullName>
        <shortName>RefilinA</shortName>
    </alternativeName>
</protein>
<accession>Q7TS73</accession>
<accession>Q9CXQ6</accession>
<keyword id="KW-0963">Cytoplasm</keyword>
<keyword id="KW-0206">Cytoskeleton</keyword>
<keyword id="KW-0488">Methylation</keyword>
<keyword id="KW-1185">Reference proteome</keyword>
<name>RFLA_MOUSE</name>
<proteinExistence type="evidence at protein level"/>
<organism>
    <name type="scientific">Mus musculus</name>
    <name type="common">Mouse</name>
    <dbReference type="NCBI Taxonomy" id="10090"/>
    <lineage>
        <taxon>Eukaryota</taxon>
        <taxon>Metazoa</taxon>
        <taxon>Chordata</taxon>
        <taxon>Craniata</taxon>
        <taxon>Vertebrata</taxon>
        <taxon>Euteleostomi</taxon>
        <taxon>Mammalia</taxon>
        <taxon>Eutheria</taxon>
        <taxon>Euarchontoglires</taxon>
        <taxon>Glires</taxon>
        <taxon>Rodentia</taxon>
        <taxon>Myomorpha</taxon>
        <taxon>Muroidea</taxon>
        <taxon>Muridae</taxon>
        <taxon>Murinae</taxon>
        <taxon>Mus</taxon>
        <taxon>Mus</taxon>
    </lineage>
</organism>
<feature type="chain" id="PRO_0000274332" description="Refilin-A">
    <location>
        <begin position="1"/>
        <end position="204"/>
    </location>
</feature>
<feature type="region of interest" description="Disordered" evidence="1">
    <location>
        <begin position="1"/>
        <end position="52"/>
    </location>
</feature>
<feature type="compositionally biased region" description="Basic and acidic residues" evidence="1">
    <location>
        <begin position="12"/>
        <end position="21"/>
    </location>
</feature>
<feature type="compositionally biased region" description="Pro residues" evidence="1">
    <location>
        <begin position="28"/>
        <end position="38"/>
    </location>
</feature>
<feature type="modified residue" description="Asymmetric dimethylarginine" evidence="7">
    <location>
        <position position="151"/>
    </location>
</feature>
<feature type="sequence conflict" description="In Ref. 1; BAB29164." evidence="6" ref="1">
    <original>D</original>
    <variation>E</variation>
    <location>
        <position position="193"/>
    </location>
</feature>
<gene>
    <name type="primary">Rflna</name>
    <name evidence="5" type="synonym">Cfm2</name>
    <name type="synonym">Fam101a</name>
</gene>
<comment type="function">
    <text evidence="2 3">Involved in the regulation of the perinuclear actin network and nuclear shape through interaction with filamins. Plays an essential role in the formation of cartilaginous skeletal elements.</text>
</comment>
<comment type="subunit">
    <text evidence="2 3">Interacts with FLNA and FLNB.</text>
</comment>
<comment type="subcellular location">
    <subcellularLocation>
        <location evidence="2 3">Cytoplasm</location>
        <location evidence="2 3">Cytoskeleton</location>
    </subcellularLocation>
    <text evidence="3">Colocalizes with FLNA along actin bundle-like structures.</text>
</comment>
<comment type="tissue specificity">
    <text evidence="3">Detected in various tissues, with highest expression in lung, followed by spleen.</text>
</comment>
<comment type="developmental stage">
    <text evidence="3">Expression is first detected in the marginal zone of the vertebral primordia at 12.5 dpc. Expression is subsequently observed during skeletal development in the cartilaginous elements including the vertebral bodies, carpal bones, femora, ribs and caudal vertebrae. At 18.5 dpc, expression is increased in the layers of proliferating and prehypertrophic chondrocytes. Furthermore, expression is also observed in intervertebral disk, including nucleus pulposus and annulus fibrosus, during skeletal development.</text>
</comment>
<comment type="induction">
    <text evidence="3">Up-regulated during chondrocyte differentiation.</text>
</comment>
<comment type="disruption phenotype">
    <text evidence="3">No visible phenotype; probably due to redundancy with RFLNB. RFLNA and RFLNB double mutant mice exhibit severe skeletal malformations, as characterized by scoliosis, kyphosis, intervertebral disks defects, vertebral fusion in the spine and longitudinal bone growth retardation. Chondrocyte maturation is accelerated in double mutant mice.</text>
</comment>
<comment type="similarity">
    <text evidence="6">Belongs to the Refilin family.</text>
</comment>
<evidence type="ECO:0000256" key="1">
    <source>
        <dbReference type="SAM" id="MobiDB-lite"/>
    </source>
</evidence>
<evidence type="ECO:0000269" key="2">
    <source>
    </source>
</evidence>
<evidence type="ECO:0000269" key="3">
    <source>
    </source>
</evidence>
<evidence type="ECO:0000303" key="4">
    <source>
    </source>
</evidence>
<evidence type="ECO:0000303" key="5">
    <source>
    </source>
</evidence>
<evidence type="ECO:0000305" key="6"/>
<evidence type="ECO:0007744" key="7">
    <source>
    </source>
</evidence>
<sequence>MVGHLHLQAMGDTREQSRDGLLDSPDSGLPPSPSPSPPFYALSPGTLDTRTTTEAPAAPSLFQTPPALEMRSRLLPVFFGESIEVDPEPAHEIRCNSEITYASERYFRDKIFYAPVPTVTAYSETIVAAPNCTWRSYRSQLTLEPRPRALRFGSTAIIFPKLARSSFRTTLHCSLGQPRHWYSSSLQLRRCGDPTPGPSCPDVL</sequence>
<reference key="1">
    <citation type="journal article" date="2005" name="Science">
        <title>The transcriptional landscape of the mammalian genome.</title>
        <authorList>
            <person name="Carninci P."/>
            <person name="Kasukawa T."/>
            <person name="Katayama S."/>
            <person name="Gough J."/>
            <person name="Frith M.C."/>
            <person name="Maeda N."/>
            <person name="Oyama R."/>
            <person name="Ravasi T."/>
            <person name="Lenhard B."/>
            <person name="Wells C."/>
            <person name="Kodzius R."/>
            <person name="Shimokawa K."/>
            <person name="Bajic V.B."/>
            <person name="Brenner S.E."/>
            <person name="Batalov S."/>
            <person name="Forrest A.R."/>
            <person name="Zavolan M."/>
            <person name="Davis M.J."/>
            <person name="Wilming L.G."/>
            <person name="Aidinis V."/>
            <person name="Allen J.E."/>
            <person name="Ambesi-Impiombato A."/>
            <person name="Apweiler R."/>
            <person name="Aturaliya R.N."/>
            <person name="Bailey T.L."/>
            <person name="Bansal M."/>
            <person name="Baxter L."/>
            <person name="Beisel K.W."/>
            <person name="Bersano T."/>
            <person name="Bono H."/>
            <person name="Chalk A.M."/>
            <person name="Chiu K.P."/>
            <person name="Choudhary V."/>
            <person name="Christoffels A."/>
            <person name="Clutterbuck D.R."/>
            <person name="Crowe M.L."/>
            <person name="Dalla E."/>
            <person name="Dalrymple B.P."/>
            <person name="de Bono B."/>
            <person name="Della Gatta G."/>
            <person name="di Bernardo D."/>
            <person name="Down T."/>
            <person name="Engstrom P."/>
            <person name="Fagiolini M."/>
            <person name="Faulkner G."/>
            <person name="Fletcher C.F."/>
            <person name="Fukushima T."/>
            <person name="Furuno M."/>
            <person name="Futaki S."/>
            <person name="Gariboldi M."/>
            <person name="Georgii-Hemming P."/>
            <person name="Gingeras T.R."/>
            <person name="Gojobori T."/>
            <person name="Green R.E."/>
            <person name="Gustincich S."/>
            <person name="Harbers M."/>
            <person name="Hayashi Y."/>
            <person name="Hensch T.K."/>
            <person name="Hirokawa N."/>
            <person name="Hill D."/>
            <person name="Huminiecki L."/>
            <person name="Iacono M."/>
            <person name="Ikeo K."/>
            <person name="Iwama A."/>
            <person name="Ishikawa T."/>
            <person name="Jakt M."/>
            <person name="Kanapin A."/>
            <person name="Katoh M."/>
            <person name="Kawasawa Y."/>
            <person name="Kelso J."/>
            <person name="Kitamura H."/>
            <person name="Kitano H."/>
            <person name="Kollias G."/>
            <person name="Krishnan S.P."/>
            <person name="Kruger A."/>
            <person name="Kummerfeld S.K."/>
            <person name="Kurochkin I.V."/>
            <person name="Lareau L.F."/>
            <person name="Lazarevic D."/>
            <person name="Lipovich L."/>
            <person name="Liu J."/>
            <person name="Liuni S."/>
            <person name="McWilliam S."/>
            <person name="Madan Babu M."/>
            <person name="Madera M."/>
            <person name="Marchionni L."/>
            <person name="Matsuda H."/>
            <person name="Matsuzawa S."/>
            <person name="Miki H."/>
            <person name="Mignone F."/>
            <person name="Miyake S."/>
            <person name="Morris K."/>
            <person name="Mottagui-Tabar S."/>
            <person name="Mulder N."/>
            <person name="Nakano N."/>
            <person name="Nakauchi H."/>
            <person name="Ng P."/>
            <person name="Nilsson R."/>
            <person name="Nishiguchi S."/>
            <person name="Nishikawa S."/>
            <person name="Nori F."/>
            <person name="Ohara O."/>
            <person name="Okazaki Y."/>
            <person name="Orlando V."/>
            <person name="Pang K.C."/>
            <person name="Pavan W.J."/>
            <person name="Pavesi G."/>
            <person name="Pesole G."/>
            <person name="Petrovsky N."/>
            <person name="Piazza S."/>
            <person name="Reed J."/>
            <person name="Reid J.F."/>
            <person name="Ring B.Z."/>
            <person name="Ringwald M."/>
            <person name="Rost B."/>
            <person name="Ruan Y."/>
            <person name="Salzberg S.L."/>
            <person name="Sandelin A."/>
            <person name="Schneider C."/>
            <person name="Schoenbach C."/>
            <person name="Sekiguchi K."/>
            <person name="Semple C.A."/>
            <person name="Seno S."/>
            <person name="Sessa L."/>
            <person name="Sheng Y."/>
            <person name="Shibata Y."/>
            <person name="Shimada H."/>
            <person name="Shimada K."/>
            <person name="Silva D."/>
            <person name="Sinclair B."/>
            <person name="Sperling S."/>
            <person name="Stupka E."/>
            <person name="Sugiura K."/>
            <person name="Sultana R."/>
            <person name="Takenaka Y."/>
            <person name="Taki K."/>
            <person name="Tammoja K."/>
            <person name="Tan S.L."/>
            <person name="Tang S."/>
            <person name="Taylor M.S."/>
            <person name="Tegner J."/>
            <person name="Teichmann S.A."/>
            <person name="Ueda H.R."/>
            <person name="van Nimwegen E."/>
            <person name="Verardo R."/>
            <person name="Wei C.L."/>
            <person name="Yagi K."/>
            <person name="Yamanishi H."/>
            <person name="Zabarovsky E."/>
            <person name="Zhu S."/>
            <person name="Zimmer A."/>
            <person name="Hide W."/>
            <person name="Bult C."/>
            <person name="Grimmond S.M."/>
            <person name="Teasdale R.D."/>
            <person name="Liu E.T."/>
            <person name="Brusic V."/>
            <person name="Quackenbush J."/>
            <person name="Wahlestedt C."/>
            <person name="Mattick J.S."/>
            <person name="Hume D.A."/>
            <person name="Kai C."/>
            <person name="Sasaki D."/>
            <person name="Tomaru Y."/>
            <person name="Fukuda S."/>
            <person name="Kanamori-Katayama M."/>
            <person name="Suzuki M."/>
            <person name="Aoki J."/>
            <person name="Arakawa T."/>
            <person name="Iida J."/>
            <person name="Imamura K."/>
            <person name="Itoh M."/>
            <person name="Kato T."/>
            <person name="Kawaji H."/>
            <person name="Kawagashira N."/>
            <person name="Kawashima T."/>
            <person name="Kojima M."/>
            <person name="Kondo S."/>
            <person name="Konno H."/>
            <person name="Nakano K."/>
            <person name="Ninomiya N."/>
            <person name="Nishio T."/>
            <person name="Okada M."/>
            <person name="Plessy C."/>
            <person name="Shibata K."/>
            <person name="Shiraki T."/>
            <person name="Suzuki S."/>
            <person name="Tagami M."/>
            <person name="Waki K."/>
            <person name="Watahiki A."/>
            <person name="Okamura-Oho Y."/>
            <person name="Suzuki H."/>
            <person name="Kawai J."/>
            <person name="Hayashizaki Y."/>
        </authorList>
    </citation>
    <scope>NUCLEOTIDE SEQUENCE [LARGE SCALE MRNA]</scope>
    <source>
        <strain>C57BL/6J</strain>
        <tissue>Head</tissue>
    </source>
</reference>
<reference key="2">
    <citation type="journal article" date="2004" name="Genome Res.">
        <title>The status, quality, and expansion of the NIH full-length cDNA project: the Mammalian Gene Collection (MGC).</title>
        <authorList>
            <consortium name="The MGC Project Team"/>
        </authorList>
    </citation>
    <scope>NUCLEOTIDE SEQUENCE [LARGE SCALE MRNA]</scope>
    <source>
        <tissue>Embryo</tissue>
    </source>
</reference>
<reference key="3">
    <citation type="journal article" date="2011" name="Proc. Natl. Acad. Sci. U.S.A.">
        <title>RefilinB (FAM101B) targets filamin A to organize perinuclear actin networks and regulates nuclear shape.</title>
        <authorList>
            <person name="Gay O."/>
            <person name="Gilquin B."/>
            <person name="Nakamura F."/>
            <person name="Jenkins Z.A."/>
            <person name="McCartney R."/>
            <person name="Krakow D."/>
            <person name="Deshiere A."/>
            <person name="Assard N."/>
            <person name="Hartwig J.H."/>
            <person name="Robertson S.P."/>
            <person name="Baudier J."/>
        </authorList>
    </citation>
    <scope>INTERACTION WITH FLNA AND FLNB</scope>
    <scope>FUNCTION</scope>
    <scope>SUBCELLULAR LOCATION</scope>
</reference>
<reference key="4">
    <citation type="journal article" date="2014" name="Hum. Mol. Genet.">
        <title>Filamin-interacting proteins, Cfm1 and Cfm2, are essential for the formation of cartilaginous skeletal elements.</title>
        <authorList>
            <person name="Mizuhashi K."/>
            <person name="Kanamoto T."/>
            <person name="Moriishi T."/>
            <person name="Muranishi Y."/>
            <person name="Miyazaki T."/>
            <person name="Terada K."/>
            <person name="Omori Y."/>
            <person name="Ito M."/>
            <person name="Komori T."/>
            <person name="Furukawa T."/>
        </authorList>
    </citation>
    <scope>TISSUE SPECIFICITY</scope>
    <scope>DEVELOPMENTAL STAGE</scope>
    <scope>DISRUPTION PHENOTYPE</scope>
    <scope>FUNCTION</scope>
    <scope>INDUCTION</scope>
    <scope>SUBCELLULAR LOCATION</scope>
    <scope>INTERACTION WITH FLNA AND FLNB</scope>
</reference>
<reference key="5">
    <citation type="journal article" date="2014" name="Mol. Cell. Proteomics">
        <title>Immunoaffinity enrichment and mass spectrometry analysis of protein methylation.</title>
        <authorList>
            <person name="Guo A."/>
            <person name="Gu H."/>
            <person name="Zhou J."/>
            <person name="Mulhern D."/>
            <person name="Wang Y."/>
            <person name="Lee K.A."/>
            <person name="Yang V."/>
            <person name="Aguiar M."/>
            <person name="Kornhauser J."/>
            <person name="Jia X."/>
            <person name="Ren J."/>
            <person name="Beausoleil S.A."/>
            <person name="Silva J.C."/>
            <person name="Vemulapalli V."/>
            <person name="Bedford M.T."/>
            <person name="Comb M.J."/>
        </authorList>
    </citation>
    <scope>METHYLATION [LARGE SCALE ANALYSIS] AT ARG-151</scope>
    <scope>IDENTIFICATION BY MASS SPECTROMETRY [LARGE SCALE ANALYSIS]</scope>
    <source>
        <tissue>Embryo</tissue>
    </source>
</reference>
<dbReference type="EMBL" id="AK014112">
    <property type="protein sequence ID" value="BAB29164.1"/>
    <property type="molecule type" value="mRNA"/>
</dbReference>
<dbReference type="EMBL" id="BC053444">
    <property type="protein sequence ID" value="AAH53444.1"/>
    <property type="molecule type" value="mRNA"/>
</dbReference>
<dbReference type="CCDS" id="CCDS19682.1"/>
<dbReference type="RefSeq" id="NP_082719.1">
    <property type="nucleotide sequence ID" value="NM_028443.3"/>
</dbReference>
<dbReference type="BioGRID" id="215780">
    <property type="interactions" value="2"/>
</dbReference>
<dbReference type="FunCoup" id="Q7TS73">
    <property type="interactions" value="15"/>
</dbReference>
<dbReference type="STRING" id="10090.ENSMUSP00000048230"/>
<dbReference type="GlyGen" id="Q7TS73">
    <property type="glycosylation" value="1 site"/>
</dbReference>
<dbReference type="iPTMnet" id="Q7TS73"/>
<dbReference type="PhosphoSitePlus" id="Q7TS73"/>
<dbReference type="PaxDb" id="10090-ENSMUSP00000048230"/>
<dbReference type="ProteomicsDB" id="254923"/>
<dbReference type="Antibodypedia" id="31861">
    <property type="antibodies" value="104 antibodies from 21 providers"/>
</dbReference>
<dbReference type="DNASU" id="73121"/>
<dbReference type="Ensembl" id="ENSMUST00000036109.8">
    <property type="protein sequence ID" value="ENSMUSP00000048230.4"/>
    <property type="gene ID" value="ENSMUSG00000037962.8"/>
</dbReference>
<dbReference type="Ensembl" id="ENSMUST00000197746.2">
    <property type="protein sequence ID" value="ENSMUSP00000142824.2"/>
    <property type="gene ID" value="ENSMUSG00000037962.8"/>
</dbReference>
<dbReference type="GeneID" id="73121"/>
<dbReference type="KEGG" id="mmu:73121"/>
<dbReference type="UCSC" id="uc008zqt.1">
    <property type="organism name" value="mouse"/>
</dbReference>
<dbReference type="AGR" id="MGI:1920371"/>
<dbReference type="CTD" id="144347"/>
<dbReference type="MGI" id="MGI:1920371">
    <property type="gene designation" value="Rflna"/>
</dbReference>
<dbReference type="VEuPathDB" id="HostDB:ENSMUSG00000037962"/>
<dbReference type="eggNOG" id="ENOG502QQHM">
    <property type="taxonomic scope" value="Eukaryota"/>
</dbReference>
<dbReference type="GeneTree" id="ENSGT00390000016836"/>
<dbReference type="HOGENOM" id="CLU_107206_0_0_1"/>
<dbReference type="InParanoid" id="Q7TS73"/>
<dbReference type="OMA" id="AKDGKVM"/>
<dbReference type="OrthoDB" id="9946281at2759"/>
<dbReference type="PhylomeDB" id="Q7TS73"/>
<dbReference type="TreeFam" id="TF332387"/>
<dbReference type="BioGRID-ORCS" id="73121">
    <property type="hits" value="1 hit in 79 CRISPR screens"/>
</dbReference>
<dbReference type="PRO" id="PR:Q7TS73"/>
<dbReference type="Proteomes" id="UP000000589">
    <property type="component" value="Chromosome 5"/>
</dbReference>
<dbReference type="RNAct" id="Q7TS73">
    <property type="molecule type" value="protein"/>
</dbReference>
<dbReference type="Bgee" id="ENSMUSG00000037962">
    <property type="expression patterns" value="Expressed in postcranial axial skeleton and 178 other cell types or tissues"/>
</dbReference>
<dbReference type="GO" id="GO:0032432">
    <property type="term" value="C:actin filament bundle"/>
    <property type="evidence" value="ECO:0000314"/>
    <property type="project" value="MGI"/>
</dbReference>
<dbReference type="GO" id="GO:0005737">
    <property type="term" value="C:cytoplasm"/>
    <property type="evidence" value="ECO:0007669"/>
    <property type="project" value="UniProtKB-KW"/>
</dbReference>
<dbReference type="GO" id="GO:0031005">
    <property type="term" value="F:filamin binding"/>
    <property type="evidence" value="ECO:0000314"/>
    <property type="project" value="MGI"/>
</dbReference>
<dbReference type="GO" id="GO:0061572">
    <property type="term" value="P:actin filament bundle organization"/>
    <property type="evidence" value="ECO:0000316"/>
    <property type="project" value="MGI"/>
</dbReference>
<dbReference type="GO" id="GO:1900158">
    <property type="term" value="P:negative regulation of bone mineralization involved in bone maturation"/>
    <property type="evidence" value="ECO:0000316"/>
    <property type="project" value="MGI"/>
</dbReference>
<dbReference type="GO" id="GO:0061182">
    <property type="term" value="P:negative regulation of chondrocyte development"/>
    <property type="evidence" value="ECO:0000316"/>
    <property type="project" value="MGI"/>
</dbReference>
<dbReference type="GO" id="GO:0048705">
    <property type="term" value="P:skeletal system morphogenesis"/>
    <property type="evidence" value="ECO:0000316"/>
    <property type="project" value="MGI"/>
</dbReference>
<dbReference type="InterPro" id="IPR028215">
    <property type="entry name" value="Refilin"/>
</dbReference>
<dbReference type="PANTHER" id="PTHR31848">
    <property type="match status" value="1"/>
</dbReference>
<dbReference type="PANTHER" id="PTHR31848:SF0">
    <property type="entry name" value="REFILIN-A"/>
    <property type="match status" value="1"/>
</dbReference>
<dbReference type="Pfam" id="PF15068">
    <property type="entry name" value="FAM101"/>
    <property type="match status" value="1"/>
</dbReference>